<name>KCY_RHOJR</name>
<organism>
    <name type="scientific">Rhodococcus jostii (strain RHA1)</name>
    <dbReference type="NCBI Taxonomy" id="101510"/>
    <lineage>
        <taxon>Bacteria</taxon>
        <taxon>Bacillati</taxon>
        <taxon>Actinomycetota</taxon>
        <taxon>Actinomycetes</taxon>
        <taxon>Mycobacteriales</taxon>
        <taxon>Nocardiaceae</taxon>
        <taxon>Rhodococcus</taxon>
    </lineage>
</organism>
<sequence length="229" mass="24066">MSTSKLVVAMDGPSGTGKSSVSRMLAQRLDARYLDTGAMYRIATLHALRKGVDLTDPAAIADATAGLPWSIGTDPAGEQVLLDGEDVGEEIRGDAVTKAVSAVSAVPAVRELLVAAQRRLAGEAERIVVEGRDIGTVVIPDADVKIYLTASAEARAQRRNAQNLAEGRGDDYAAVLADVQRRDHLDSTRAVSPLRPADDSVLVDTSELGIDDVIGRLLLVVSERTGAGQ</sequence>
<feature type="chain" id="PRO_1000048263" description="Cytidylate kinase">
    <location>
        <begin position="1"/>
        <end position="229"/>
    </location>
</feature>
<feature type="binding site" evidence="1">
    <location>
        <begin position="12"/>
        <end position="20"/>
    </location>
    <ligand>
        <name>ATP</name>
        <dbReference type="ChEBI" id="CHEBI:30616"/>
    </ligand>
</feature>
<dbReference type="EC" id="2.7.4.25" evidence="1"/>
<dbReference type="EMBL" id="CP000431">
    <property type="protein sequence ID" value="ABG92755.1"/>
    <property type="molecule type" value="Genomic_DNA"/>
</dbReference>
<dbReference type="RefSeq" id="WP_009473592.1">
    <property type="nucleotide sequence ID" value="NC_008268.1"/>
</dbReference>
<dbReference type="SMR" id="Q0SI81"/>
<dbReference type="KEGG" id="rha:RHA1_ro00924"/>
<dbReference type="eggNOG" id="COG0283">
    <property type="taxonomic scope" value="Bacteria"/>
</dbReference>
<dbReference type="HOGENOM" id="CLU_079959_0_0_11"/>
<dbReference type="OrthoDB" id="9807434at2"/>
<dbReference type="Proteomes" id="UP000008710">
    <property type="component" value="Chromosome"/>
</dbReference>
<dbReference type="GO" id="GO:0005829">
    <property type="term" value="C:cytosol"/>
    <property type="evidence" value="ECO:0007669"/>
    <property type="project" value="TreeGrafter"/>
</dbReference>
<dbReference type="GO" id="GO:0005524">
    <property type="term" value="F:ATP binding"/>
    <property type="evidence" value="ECO:0007669"/>
    <property type="project" value="UniProtKB-UniRule"/>
</dbReference>
<dbReference type="GO" id="GO:0036430">
    <property type="term" value="F:CMP kinase activity"/>
    <property type="evidence" value="ECO:0007669"/>
    <property type="project" value="RHEA"/>
</dbReference>
<dbReference type="GO" id="GO:0036431">
    <property type="term" value="F:dCMP kinase activity"/>
    <property type="evidence" value="ECO:0007669"/>
    <property type="project" value="RHEA"/>
</dbReference>
<dbReference type="GO" id="GO:0015949">
    <property type="term" value="P:nucleobase-containing small molecule interconversion"/>
    <property type="evidence" value="ECO:0007669"/>
    <property type="project" value="TreeGrafter"/>
</dbReference>
<dbReference type="GO" id="GO:0006220">
    <property type="term" value="P:pyrimidine nucleotide metabolic process"/>
    <property type="evidence" value="ECO:0007669"/>
    <property type="project" value="UniProtKB-UniRule"/>
</dbReference>
<dbReference type="CDD" id="cd02020">
    <property type="entry name" value="CMPK"/>
    <property type="match status" value="1"/>
</dbReference>
<dbReference type="Gene3D" id="3.40.50.300">
    <property type="entry name" value="P-loop containing nucleotide triphosphate hydrolases"/>
    <property type="match status" value="1"/>
</dbReference>
<dbReference type="HAMAP" id="MF_00238">
    <property type="entry name" value="Cytidyl_kinase_type1"/>
    <property type="match status" value="1"/>
</dbReference>
<dbReference type="InterPro" id="IPR003136">
    <property type="entry name" value="Cytidylate_kin"/>
</dbReference>
<dbReference type="InterPro" id="IPR011994">
    <property type="entry name" value="Cytidylate_kinase_dom"/>
</dbReference>
<dbReference type="InterPro" id="IPR027417">
    <property type="entry name" value="P-loop_NTPase"/>
</dbReference>
<dbReference type="NCBIfam" id="TIGR00017">
    <property type="entry name" value="cmk"/>
    <property type="match status" value="1"/>
</dbReference>
<dbReference type="PANTHER" id="PTHR21299:SF2">
    <property type="entry name" value="CYTIDYLATE KINASE"/>
    <property type="match status" value="1"/>
</dbReference>
<dbReference type="PANTHER" id="PTHR21299">
    <property type="entry name" value="CYTIDYLATE KINASE/PANTOATE-BETA-ALANINE LIGASE"/>
    <property type="match status" value="1"/>
</dbReference>
<dbReference type="Pfam" id="PF02224">
    <property type="entry name" value="Cytidylate_kin"/>
    <property type="match status" value="1"/>
</dbReference>
<dbReference type="SUPFAM" id="SSF52540">
    <property type="entry name" value="P-loop containing nucleoside triphosphate hydrolases"/>
    <property type="match status" value="1"/>
</dbReference>
<reference key="1">
    <citation type="journal article" date="2006" name="Proc. Natl. Acad. Sci. U.S.A.">
        <title>The complete genome of Rhodococcus sp. RHA1 provides insights into a catabolic powerhouse.</title>
        <authorList>
            <person name="McLeod M.P."/>
            <person name="Warren R.L."/>
            <person name="Hsiao W.W.L."/>
            <person name="Araki N."/>
            <person name="Myhre M."/>
            <person name="Fernandes C."/>
            <person name="Miyazawa D."/>
            <person name="Wong W."/>
            <person name="Lillquist A.L."/>
            <person name="Wang D."/>
            <person name="Dosanjh M."/>
            <person name="Hara H."/>
            <person name="Petrescu A."/>
            <person name="Morin R.D."/>
            <person name="Yang G."/>
            <person name="Stott J.M."/>
            <person name="Schein J.E."/>
            <person name="Shin H."/>
            <person name="Smailus D."/>
            <person name="Siddiqui A.S."/>
            <person name="Marra M.A."/>
            <person name="Jones S.J.M."/>
            <person name="Holt R."/>
            <person name="Brinkman F.S.L."/>
            <person name="Miyauchi K."/>
            <person name="Fukuda M."/>
            <person name="Davies J.E."/>
            <person name="Mohn W.W."/>
            <person name="Eltis L.D."/>
        </authorList>
    </citation>
    <scope>NUCLEOTIDE SEQUENCE [LARGE SCALE GENOMIC DNA]</scope>
    <source>
        <strain>RHA1</strain>
    </source>
</reference>
<accession>Q0SI81</accession>
<comment type="catalytic activity">
    <reaction evidence="1">
        <text>CMP + ATP = CDP + ADP</text>
        <dbReference type="Rhea" id="RHEA:11600"/>
        <dbReference type="ChEBI" id="CHEBI:30616"/>
        <dbReference type="ChEBI" id="CHEBI:58069"/>
        <dbReference type="ChEBI" id="CHEBI:60377"/>
        <dbReference type="ChEBI" id="CHEBI:456216"/>
        <dbReference type="EC" id="2.7.4.25"/>
    </reaction>
</comment>
<comment type="catalytic activity">
    <reaction evidence="1">
        <text>dCMP + ATP = dCDP + ADP</text>
        <dbReference type="Rhea" id="RHEA:25094"/>
        <dbReference type="ChEBI" id="CHEBI:30616"/>
        <dbReference type="ChEBI" id="CHEBI:57566"/>
        <dbReference type="ChEBI" id="CHEBI:58593"/>
        <dbReference type="ChEBI" id="CHEBI:456216"/>
        <dbReference type="EC" id="2.7.4.25"/>
    </reaction>
</comment>
<comment type="subcellular location">
    <subcellularLocation>
        <location evidence="1">Cytoplasm</location>
    </subcellularLocation>
</comment>
<comment type="similarity">
    <text evidence="1">Belongs to the cytidylate kinase family. Type 1 subfamily.</text>
</comment>
<evidence type="ECO:0000255" key="1">
    <source>
        <dbReference type="HAMAP-Rule" id="MF_00238"/>
    </source>
</evidence>
<protein>
    <recommendedName>
        <fullName evidence="1">Cytidylate kinase</fullName>
        <shortName evidence="1">CK</shortName>
        <ecNumber evidence="1">2.7.4.25</ecNumber>
    </recommendedName>
    <alternativeName>
        <fullName evidence="1">Cytidine monophosphate kinase</fullName>
        <shortName evidence="1">CMP kinase</shortName>
    </alternativeName>
</protein>
<keyword id="KW-0067">ATP-binding</keyword>
<keyword id="KW-0963">Cytoplasm</keyword>
<keyword id="KW-0418">Kinase</keyword>
<keyword id="KW-0547">Nucleotide-binding</keyword>
<keyword id="KW-0808">Transferase</keyword>
<proteinExistence type="inferred from homology"/>
<gene>
    <name evidence="1" type="primary">cmk</name>
    <name type="ordered locus">RHA1_ro00924</name>
</gene>